<gene>
    <name evidence="1" type="primary">arnE</name>
    <name type="ordered locus">STY2532</name>
    <name type="ordered locus">t0561</name>
</gene>
<organism>
    <name type="scientific">Salmonella typhi</name>
    <dbReference type="NCBI Taxonomy" id="90370"/>
    <lineage>
        <taxon>Bacteria</taxon>
        <taxon>Pseudomonadati</taxon>
        <taxon>Pseudomonadota</taxon>
        <taxon>Gammaproteobacteria</taxon>
        <taxon>Enterobacterales</taxon>
        <taxon>Enterobacteriaceae</taxon>
        <taxon>Salmonella</taxon>
    </lineage>
</organism>
<reference key="1">
    <citation type="journal article" date="1999" name="Microbiology">
        <title>The Salmonella typhi melittin resistance gene pqaB affects intracellular growth in PMA-differentiated U937 cells, polymyxin B resistance and lipopolysaccharide.</title>
        <authorList>
            <person name="Baker S.J."/>
            <person name="Gunn J.S."/>
            <person name="Morona R."/>
        </authorList>
    </citation>
    <scope>NUCLEOTIDE SEQUENCE [GENOMIC DNA]</scope>
    <source>
        <strain>Ty2 / RMA2326</strain>
    </source>
</reference>
<reference key="2">
    <citation type="journal article" date="2001" name="Nature">
        <title>Complete genome sequence of a multiple drug resistant Salmonella enterica serovar Typhi CT18.</title>
        <authorList>
            <person name="Parkhill J."/>
            <person name="Dougan G."/>
            <person name="James K.D."/>
            <person name="Thomson N.R."/>
            <person name="Pickard D."/>
            <person name="Wain J."/>
            <person name="Churcher C.M."/>
            <person name="Mungall K.L."/>
            <person name="Bentley S.D."/>
            <person name="Holden M.T.G."/>
            <person name="Sebaihia M."/>
            <person name="Baker S."/>
            <person name="Basham D."/>
            <person name="Brooks K."/>
            <person name="Chillingworth T."/>
            <person name="Connerton P."/>
            <person name="Cronin A."/>
            <person name="Davis P."/>
            <person name="Davies R.M."/>
            <person name="Dowd L."/>
            <person name="White N."/>
            <person name="Farrar J."/>
            <person name="Feltwell T."/>
            <person name="Hamlin N."/>
            <person name="Haque A."/>
            <person name="Hien T.T."/>
            <person name="Holroyd S."/>
            <person name="Jagels K."/>
            <person name="Krogh A."/>
            <person name="Larsen T.S."/>
            <person name="Leather S."/>
            <person name="Moule S."/>
            <person name="O'Gaora P."/>
            <person name="Parry C."/>
            <person name="Quail M.A."/>
            <person name="Rutherford K.M."/>
            <person name="Simmonds M."/>
            <person name="Skelton J."/>
            <person name="Stevens K."/>
            <person name="Whitehead S."/>
            <person name="Barrell B.G."/>
        </authorList>
    </citation>
    <scope>NUCLEOTIDE SEQUENCE [LARGE SCALE GENOMIC DNA]</scope>
    <source>
        <strain>CT18</strain>
    </source>
</reference>
<reference key="3">
    <citation type="journal article" date="2003" name="J. Bacteriol.">
        <title>Comparative genomics of Salmonella enterica serovar Typhi strains Ty2 and CT18.</title>
        <authorList>
            <person name="Deng W."/>
            <person name="Liou S.-R."/>
            <person name="Plunkett G. III"/>
            <person name="Mayhew G.F."/>
            <person name="Rose D.J."/>
            <person name="Burland V."/>
            <person name="Kodoyianni V."/>
            <person name="Schwartz D.C."/>
            <person name="Blattner F.R."/>
        </authorList>
    </citation>
    <scope>NUCLEOTIDE SEQUENCE [LARGE SCALE GENOMIC DNA]</scope>
    <source>
        <strain>ATCC 700931 / Ty2</strain>
    </source>
</reference>
<name>ARNE_SALTI</name>
<sequence length="111" mass="12105">MIGIVLVLASLLSVGGQLCQKQATRPLTTGGRRRHLMLWLGLALICMGAAMVLWLLVLQTLPVGIAYPMLSLNFVWVTLAAWKIWHEQVLPRHWLGVALIISGIIILGSAA</sequence>
<protein>
    <recommendedName>
        <fullName evidence="1">Probable 4-amino-4-deoxy-L-arabinose-phosphoundecaprenol flippase subunit ArnE</fullName>
        <shortName evidence="1">L-Ara4N-phosphoundecaprenol flippase subunit ArnE</shortName>
    </recommendedName>
    <alternativeName>
        <fullName evidence="1">Undecaprenyl phosphate-aminoarabinose flippase subunit ArnE</fullName>
    </alternativeName>
</protein>
<accession>P81891</accession>
<evidence type="ECO:0000255" key="1">
    <source>
        <dbReference type="HAMAP-Rule" id="MF_01869"/>
    </source>
</evidence>
<evidence type="ECO:0000305" key="2"/>
<feature type="chain" id="PRO_0000169185" description="Probable 4-amino-4-deoxy-L-arabinose-phosphoundecaprenol flippase subunit ArnE">
    <location>
        <begin position="1"/>
        <end position="111"/>
    </location>
</feature>
<feature type="transmembrane region" description="Helical" evidence="1">
    <location>
        <begin position="38"/>
        <end position="58"/>
    </location>
</feature>
<feature type="transmembrane region" description="Helical" evidence="1">
    <location>
        <begin position="61"/>
        <end position="81"/>
    </location>
</feature>
<feature type="transmembrane region" description="Helical" evidence="1">
    <location>
        <begin position="89"/>
        <end position="109"/>
    </location>
</feature>
<feature type="domain" description="EamA" evidence="1">
    <location>
        <begin position="40"/>
        <end position="109"/>
    </location>
</feature>
<feature type="sequence conflict" description="In Ref. 1; AAD20797." evidence="2" ref="1">
    <original>L</original>
    <variation>P</variation>
    <location>
        <position position="90"/>
    </location>
</feature>
<comment type="function">
    <text evidence="1">Translocates 4-amino-4-deoxy-L-arabinose-phosphoundecaprenol (alpha-L-Ara4N-phosphoundecaprenol) from the cytoplasmic to the periplasmic side of the inner membrane.</text>
</comment>
<comment type="pathway">
    <text evidence="1">Bacterial outer membrane biogenesis; lipopolysaccharide biosynthesis.</text>
</comment>
<comment type="subunit">
    <text evidence="1">Heterodimer of ArnE and ArnF.</text>
</comment>
<comment type="subcellular location">
    <subcellularLocation>
        <location evidence="1">Cell inner membrane</location>
        <topology evidence="1">Multi-pass membrane protein</topology>
    </subcellularLocation>
</comment>
<comment type="similarity">
    <text evidence="1">Belongs to the ArnE family.</text>
</comment>
<dbReference type="EMBL" id="AF071082">
    <property type="protein sequence ID" value="AAD20797.1"/>
    <property type="molecule type" value="Genomic_DNA"/>
</dbReference>
<dbReference type="EMBL" id="AL513382">
    <property type="protein sequence ID" value="CAD07535.1"/>
    <property type="molecule type" value="Genomic_DNA"/>
</dbReference>
<dbReference type="EMBL" id="AE014613">
    <property type="protein sequence ID" value="AAO68267.1"/>
    <property type="molecule type" value="Genomic_DNA"/>
</dbReference>
<dbReference type="RefSeq" id="NP_456845.1">
    <property type="nucleotide sequence ID" value="NC_003198.1"/>
</dbReference>
<dbReference type="RefSeq" id="WP_000579483.1">
    <property type="nucleotide sequence ID" value="NZ_WSUR01000039.1"/>
</dbReference>
<dbReference type="SMR" id="P81891"/>
<dbReference type="STRING" id="220341.gene:17586432"/>
<dbReference type="TCDB" id="2.A.7.22.2">
    <property type="family name" value="the drug/metabolite transporter (dmt) superfamily"/>
</dbReference>
<dbReference type="KEGG" id="stt:t0561"/>
<dbReference type="KEGG" id="sty:STY2532"/>
<dbReference type="PATRIC" id="fig|220341.7.peg.2563"/>
<dbReference type="eggNOG" id="COG2076">
    <property type="taxonomic scope" value="Bacteria"/>
</dbReference>
<dbReference type="HOGENOM" id="CLU_131462_5_1_6"/>
<dbReference type="OMA" id="TCAGQLC"/>
<dbReference type="OrthoDB" id="6058674at2"/>
<dbReference type="UniPathway" id="UPA00030"/>
<dbReference type="Proteomes" id="UP000000541">
    <property type="component" value="Chromosome"/>
</dbReference>
<dbReference type="Proteomes" id="UP000002670">
    <property type="component" value="Chromosome"/>
</dbReference>
<dbReference type="GO" id="GO:0005886">
    <property type="term" value="C:plasma membrane"/>
    <property type="evidence" value="ECO:0007669"/>
    <property type="project" value="UniProtKB-SubCell"/>
</dbReference>
<dbReference type="GO" id="GO:1901505">
    <property type="term" value="F:carbohydrate derivative transmembrane transporter activity"/>
    <property type="evidence" value="ECO:0007669"/>
    <property type="project" value="InterPro"/>
</dbReference>
<dbReference type="GO" id="GO:0009245">
    <property type="term" value="P:lipid A biosynthetic process"/>
    <property type="evidence" value="ECO:0007669"/>
    <property type="project" value="UniProtKB-UniRule"/>
</dbReference>
<dbReference type="GO" id="GO:0009103">
    <property type="term" value="P:lipopolysaccharide biosynthetic process"/>
    <property type="evidence" value="ECO:0007669"/>
    <property type="project" value="UniProtKB-UniRule"/>
</dbReference>
<dbReference type="FunFam" id="1.10.3730.20:FF:000002">
    <property type="entry name" value="Probable 4-amino-4-deoxy-L-arabinose-phosphoundecaprenol flippase subunit ArnE"/>
    <property type="match status" value="1"/>
</dbReference>
<dbReference type="Gene3D" id="1.10.3730.20">
    <property type="match status" value="1"/>
</dbReference>
<dbReference type="HAMAP" id="MF_01869">
    <property type="entry name" value="Flippase_ArnE"/>
    <property type="match status" value="1"/>
</dbReference>
<dbReference type="InterPro" id="IPR000620">
    <property type="entry name" value="EamA_dom"/>
</dbReference>
<dbReference type="InterPro" id="IPR022883">
    <property type="entry name" value="Flippase_ArnE"/>
</dbReference>
<dbReference type="InterPro" id="IPR000390">
    <property type="entry name" value="Small_drug/metabolite_transptr"/>
</dbReference>
<dbReference type="NCBIfam" id="NF011625">
    <property type="entry name" value="PRK15051.1"/>
    <property type="match status" value="1"/>
</dbReference>
<dbReference type="PANTHER" id="PTHR30561:SF23">
    <property type="entry name" value="4-AMINO-4-DEOXY-L-ARABINOSE-PHOSPHOUNDECAPRENOL FLIPPASE SUBUNIT ARNE-RELATED"/>
    <property type="match status" value="1"/>
</dbReference>
<dbReference type="PANTHER" id="PTHR30561">
    <property type="entry name" value="SMR FAMILY PROTON-DEPENDENT DRUG EFFLUX TRANSPORTER SUGE"/>
    <property type="match status" value="1"/>
</dbReference>
<dbReference type="Pfam" id="PF00892">
    <property type="entry name" value="EamA"/>
    <property type="match status" value="1"/>
</dbReference>
<dbReference type="SUPFAM" id="SSF103481">
    <property type="entry name" value="Multidrug resistance efflux transporter EmrE"/>
    <property type="match status" value="1"/>
</dbReference>
<keyword id="KW-0997">Cell inner membrane</keyword>
<keyword id="KW-1003">Cell membrane</keyword>
<keyword id="KW-0441">Lipid A biosynthesis</keyword>
<keyword id="KW-0444">Lipid biosynthesis</keyword>
<keyword id="KW-0443">Lipid metabolism</keyword>
<keyword id="KW-0448">Lipopolysaccharide biosynthesis</keyword>
<keyword id="KW-0472">Membrane</keyword>
<keyword id="KW-0812">Transmembrane</keyword>
<keyword id="KW-1133">Transmembrane helix</keyword>
<keyword id="KW-0813">Transport</keyword>
<proteinExistence type="inferred from homology"/>